<geneLocation type="plasmid">
    <name>pBRp</name>
</geneLocation>
<protein>
    <recommendedName>
        <fullName>Anthranilate synthase component 1</fullName>
        <shortName>AS</shortName>
        <shortName>ASI</shortName>
        <ecNumber>4.1.3.27</ecNumber>
    </recommendedName>
</protein>
<sequence>MKKSAYPIEIIQKQAPYHPDPTMIFNHLCESRSETLLLETADNKKKRSRKIMIIDSAMRISSEHNAVKLTPLSINGMEILLVLKKIISKKIEIYRRKKNTILIFPNIEKDLDEDKKLFSLSVFDAFRLIIKTFENREKKSKAMFFGGLFSYDLISVFETLPKLKGNQKCSNFCFYLAETLLVLDHQQKTCLIQSSLFTKNSNEKKRIEERSVEIKQKLNQKLNSIPKIKIKDINLTSNMNNFEYGSIIKKLQKLIQKGEIFQVVPSRKFYLPCPNPLSAYQKLKKSNPSPYMFFMQDQDFTLFGASPESSLKYDEKTRKIELYPIAGTRPRGRTKDGNLDLDLDSRIELEMRTNHKELAEHLMLVDLARNDLARICKPGSRYVSDLVRVDRYSHVMHLVSRVIGELREGLDALHAYASCMNMGTLTGAPKVCAMQLIAEYEKEKRGSYGGAIGYFTDLGNLDTCITIRSAYVEKRYCYNQAGAGIVYNSIPEDEVNESLNKAQAVINAIKNAHY</sequence>
<name>TRPE_BUCRP</name>
<reference key="1">
    <citation type="journal article" date="1996" name="J. Mol. Evol.">
        <title>The tryptophan biosynthetic pathway of aphid endosymbionts (Buchnera): genetics and evolution of plasmid-associated anthranilate synthase (trpEG) within the aphididae.</title>
        <authorList>
            <person name="Rouhbakhsh D."/>
            <person name="Lai C.-Y."/>
            <person name="von Dohlen C.D."/>
            <person name="Clark M.A."/>
            <person name="Baumann L."/>
            <person name="Baumann P."/>
            <person name="Moran N.A."/>
            <person name="Voegtlin D.J."/>
        </authorList>
    </citation>
    <scope>NUCLEOTIDE SEQUENCE [GENOMIC DNA]</scope>
</reference>
<gene>
    <name type="primary">trpE</name>
</gene>
<accession>Q44691</accession>
<feature type="chain" id="PRO_0000154086" description="Anthranilate synthase component 1">
    <location>
        <begin position="1"/>
        <end position="514"/>
    </location>
</feature>
<feature type="binding site" evidence="2">
    <location>
        <position position="40"/>
    </location>
    <ligand>
        <name>L-tryptophan</name>
        <dbReference type="ChEBI" id="CHEBI:57912"/>
    </ligand>
</feature>
<feature type="binding site" evidence="2">
    <location>
        <begin position="290"/>
        <end position="292"/>
    </location>
    <ligand>
        <name>L-tryptophan</name>
        <dbReference type="ChEBI" id="CHEBI:57912"/>
    </ligand>
</feature>
<feature type="binding site" evidence="2">
    <location>
        <begin position="327"/>
        <end position="328"/>
    </location>
    <ligand>
        <name>chorismate</name>
        <dbReference type="ChEBI" id="CHEBI:29748"/>
    </ligand>
</feature>
<feature type="binding site" evidence="2">
    <location>
        <position position="360"/>
    </location>
    <ligand>
        <name>Mg(2+)</name>
        <dbReference type="ChEBI" id="CHEBI:18420"/>
    </ligand>
</feature>
<feature type="binding site" evidence="2">
    <location>
        <position position="448"/>
    </location>
    <ligand>
        <name>chorismate</name>
        <dbReference type="ChEBI" id="CHEBI:29748"/>
    </ligand>
</feature>
<feature type="binding site" evidence="2">
    <location>
        <position position="468"/>
    </location>
    <ligand>
        <name>chorismate</name>
        <dbReference type="ChEBI" id="CHEBI:29748"/>
    </ligand>
</feature>
<feature type="binding site" evidence="2">
    <location>
        <begin position="482"/>
        <end position="484"/>
    </location>
    <ligand>
        <name>chorismate</name>
        <dbReference type="ChEBI" id="CHEBI:29748"/>
    </ligand>
</feature>
<feature type="binding site" evidence="2">
    <location>
        <position position="484"/>
    </location>
    <ligand>
        <name>chorismate</name>
        <dbReference type="ChEBI" id="CHEBI:29748"/>
    </ligand>
</feature>
<feature type="binding site" evidence="2">
    <location>
        <position position="497"/>
    </location>
    <ligand>
        <name>Mg(2+)</name>
        <dbReference type="ChEBI" id="CHEBI:18420"/>
    </ligand>
</feature>
<proteinExistence type="inferred from homology"/>
<organism>
    <name type="scientific">Buchnera aphidicola subsp. Rhopalosiphum padi</name>
    <dbReference type="NCBI Taxonomy" id="98793"/>
    <lineage>
        <taxon>Bacteria</taxon>
        <taxon>Pseudomonadati</taxon>
        <taxon>Pseudomonadota</taxon>
        <taxon>Gammaproteobacteria</taxon>
        <taxon>Enterobacterales</taxon>
        <taxon>Erwiniaceae</taxon>
        <taxon>Buchnera</taxon>
    </lineage>
</organism>
<evidence type="ECO:0000250" key="1"/>
<evidence type="ECO:0000250" key="2">
    <source>
        <dbReference type="UniProtKB" id="P00897"/>
    </source>
</evidence>
<evidence type="ECO:0000305" key="3"/>
<dbReference type="EC" id="4.1.3.27"/>
<dbReference type="EMBL" id="L43551">
    <property type="protein sequence ID" value="AAB05986.1"/>
    <property type="molecule type" value="Genomic_DNA"/>
</dbReference>
<dbReference type="SMR" id="Q44691"/>
<dbReference type="UniPathway" id="UPA00035">
    <property type="reaction ID" value="UER00040"/>
</dbReference>
<dbReference type="GO" id="GO:0004049">
    <property type="term" value="F:anthranilate synthase activity"/>
    <property type="evidence" value="ECO:0007669"/>
    <property type="project" value="UniProtKB-EC"/>
</dbReference>
<dbReference type="GO" id="GO:0046872">
    <property type="term" value="F:metal ion binding"/>
    <property type="evidence" value="ECO:0007669"/>
    <property type="project" value="UniProtKB-KW"/>
</dbReference>
<dbReference type="GO" id="GO:0000162">
    <property type="term" value="P:L-tryptophan biosynthetic process"/>
    <property type="evidence" value="ECO:0007669"/>
    <property type="project" value="UniProtKB-UniPathway"/>
</dbReference>
<dbReference type="Gene3D" id="3.60.120.10">
    <property type="entry name" value="Anthranilate synthase"/>
    <property type="match status" value="1"/>
</dbReference>
<dbReference type="InterPro" id="IPR005801">
    <property type="entry name" value="ADC_synthase"/>
</dbReference>
<dbReference type="InterPro" id="IPR019999">
    <property type="entry name" value="Anth_synth_I-like"/>
</dbReference>
<dbReference type="InterPro" id="IPR006805">
    <property type="entry name" value="Anth_synth_I_N"/>
</dbReference>
<dbReference type="InterPro" id="IPR005257">
    <property type="entry name" value="Anth_synth_I_TrpE"/>
</dbReference>
<dbReference type="InterPro" id="IPR015890">
    <property type="entry name" value="Chorismate_C"/>
</dbReference>
<dbReference type="NCBIfam" id="NF010079">
    <property type="entry name" value="PRK13564.1"/>
    <property type="match status" value="1"/>
</dbReference>
<dbReference type="NCBIfam" id="TIGR00565">
    <property type="entry name" value="trpE_proteo"/>
    <property type="match status" value="1"/>
</dbReference>
<dbReference type="PANTHER" id="PTHR11236">
    <property type="entry name" value="AMINOBENZOATE/ANTHRANILATE SYNTHASE"/>
    <property type="match status" value="1"/>
</dbReference>
<dbReference type="PANTHER" id="PTHR11236:SF49">
    <property type="entry name" value="ANTHRANILATE SYNTHASE COMPONENT 1"/>
    <property type="match status" value="1"/>
</dbReference>
<dbReference type="Pfam" id="PF04715">
    <property type="entry name" value="Anth_synt_I_N"/>
    <property type="match status" value="1"/>
</dbReference>
<dbReference type="Pfam" id="PF00425">
    <property type="entry name" value="Chorismate_bind"/>
    <property type="match status" value="1"/>
</dbReference>
<dbReference type="PIRSF" id="PIRSF001373">
    <property type="entry name" value="TrpE"/>
    <property type="match status" value="1"/>
</dbReference>
<dbReference type="PRINTS" id="PR00095">
    <property type="entry name" value="ANTSNTHASEI"/>
</dbReference>
<dbReference type="SUPFAM" id="SSF56322">
    <property type="entry name" value="ADC synthase"/>
    <property type="match status" value="1"/>
</dbReference>
<keyword id="KW-0028">Amino-acid biosynthesis</keyword>
<keyword id="KW-0057">Aromatic amino acid biosynthesis</keyword>
<keyword id="KW-0456">Lyase</keyword>
<keyword id="KW-0460">Magnesium</keyword>
<keyword id="KW-0479">Metal-binding</keyword>
<keyword id="KW-0614">Plasmid</keyword>
<keyword id="KW-0822">Tryptophan biosynthesis</keyword>
<comment type="function">
    <text evidence="1">Part of a heterotetrameric complex that catalyzes the two-step biosynthesis of anthranilate, an intermediate in the biosynthesis of L-tryptophan. In the first step, the glutamine-binding beta subunit (TrpG) of anthranilate synthase (AS) provides the glutamine amidotransferase activity which generates ammonia as a substrate that, along with chorismate, is used in the second step, catalyzed by the large alpha subunit of AS (TrpE) to produce anthranilate. In the absence of TrpG, TrpE can synthesize anthranilate directly from chorismate and high concentrations of ammonia (By similarity).</text>
</comment>
<comment type="catalytic activity">
    <reaction>
        <text>chorismate + L-glutamine = anthranilate + pyruvate + L-glutamate + H(+)</text>
        <dbReference type="Rhea" id="RHEA:21732"/>
        <dbReference type="ChEBI" id="CHEBI:15361"/>
        <dbReference type="ChEBI" id="CHEBI:15378"/>
        <dbReference type="ChEBI" id="CHEBI:16567"/>
        <dbReference type="ChEBI" id="CHEBI:29748"/>
        <dbReference type="ChEBI" id="CHEBI:29985"/>
        <dbReference type="ChEBI" id="CHEBI:58359"/>
        <dbReference type="EC" id="4.1.3.27"/>
    </reaction>
</comment>
<comment type="cofactor">
    <cofactor evidence="2">
        <name>Mg(2+)</name>
        <dbReference type="ChEBI" id="CHEBI:18420"/>
    </cofactor>
    <text evidence="2">Binds 1 Mg(2+) ion per subunit.</text>
</comment>
<comment type="activity regulation">
    <text evidence="1">Feedback inhibited by tryptophan.</text>
</comment>
<comment type="pathway">
    <text>Amino-acid biosynthesis; L-tryptophan biosynthesis; L-tryptophan from chorismate: step 1/5.</text>
</comment>
<comment type="subunit">
    <text evidence="1">Heterotetramer consisting of two non-identical subunits: a beta subunit (TrpG) and a large alpha subunit (TrpE).</text>
</comment>
<comment type="similarity">
    <text evidence="3">Belongs to the anthranilate synthase component I family.</text>
</comment>